<organism>
    <name type="scientific">Acinetobacter baumannii (strain AYE)</name>
    <dbReference type="NCBI Taxonomy" id="509173"/>
    <lineage>
        <taxon>Bacteria</taxon>
        <taxon>Pseudomonadati</taxon>
        <taxon>Pseudomonadota</taxon>
        <taxon>Gammaproteobacteria</taxon>
        <taxon>Moraxellales</taxon>
        <taxon>Moraxellaceae</taxon>
        <taxon>Acinetobacter</taxon>
        <taxon>Acinetobacter calcoaceticus/baumannii complex</taxon>
    </lineage>
</organism>
<sequence>MTHFIFVTGGVVSSLGKGISAASVAALLEARGLKVTMVKMDPYINVDPGTMSPFQHGEVFVTEDGAETDLDLGYYERFLRRAKMTKLNNFTSGRVYQDVLNKERRGDYLGGTVQVIPHITDNIKERVLRAGEGYDVAIVEIGGTVGDIESLPFMESVRQLMVELGHKRTMLMHLTLLPYIKSAAELKTKPTQHSVKELLSIGIQPDILICRTEYDVDADTKRKIALFTNVEARAVVVCKDAKTIYQIPRGFYEQNVDDLICERFGFTDLPEADLTDWDNVVEALLNPEYTVRVAMVGKYVELPDAYKSVNEALLHAGIKNRVKVQIDYVNAEELESQDVSILKTADAILVPGGFGERGTEGKMKAIQYARENGIPFLGICLGMQLAVIEYARHVAGMPEASSTEFNRSTKYPLIGLITEWLDERGELQQRSLESDLGGTMRLGAQKSELVEGTKTREVYGKAEITERHRHRYEMNNRFIEAIEQAGMKISGYSSAQHLVETVEIPEHPWFIAVQFHPEFTSSPRDGHPLFASFIDAAKTQHQKSK</sequence>
<reference key="1">
    <citation type="journal article" date="2008" name="PLoS ONE">
        <title>Comparative analysis of Acinetobacters: three genomes for three lifestyles.</title>
        <authorList>
            <person name="Vallenet D."/>
            <person name="Nordmann P."/>
            <person name="Barbe V."/>
            <person name="Poirel L."/>
            <person name="Mangenot S."/>
            <person name="Bataille E."/>
            <person name="Dossat C."/>
            <person name="Gas S."/>
            <person name="Kreimeyer A."/>
            <person name="Lenoble P."/>
            <person name="Oztas S."/>
            <person name="Poulain J."/>
            <person name="Segurens B."/>
            <person name="Robert C."/>
            <person name="Abergel C."/>
            <person name="Claverie J.-M."/>
            <person name="Raoult D."/>
            <person name="Medigue C."/>
            <person name="Weissenbach J."/>
            <person name="Cruveiller S."/>
        </authorList>
    </citation>
    <scope>NUCLEOTIDE SEQUENCE [LARGE SCALE GENOMIC DNA]</scope>
    <source>
        <strain>AYE</strain>
    </source>
</reference>
<name>PYRG_ACIBY</name>
<feature type="chain" id="PRO_1000139360" description="CTP synthase">
    <location>
        <begin position="1"/>
        <end position="545"/>
    </location>
</feature>
<feature type="domain" description="Glutamine amidotransferase type-1" evidence="1">
    <location>
        <begin position="292"/>
        <end position="543"/>
    </location>
</feature>
<feature type="region of interest" description="Amidoligase domain" evidence="1">
    <location>
        <begin position="1"/>
        <end position="266"/>
    </location>
</feature>
<feature type="active site" description="Nucleophile; for glutamine hydrolysis" evidence="1">
    <location>
        <position position="380"/>
    </location>
</feature>
<feature type="active site" evidence="1">
    <location>
        <position position="516"/>
    </location>
</feature>
<feature type="active site" evidence="1">
    <location>
        <position position="518"/>
    </location>
</feature>
<feature type="binding site" evidence="1">
    <location>
        <position position="13"/>
    </location>
    <ligand>
        <name>CTP</name>
        <dbReference type="ChEBI" id="CHEBI:37563"/>
        <note>allosteric inhibitor</note>
    </ligand>
</feature>
<feature type="binding site" evidence="1">
    <location>
        <position position="13"/>
    </location>
    <ligand>
        <name>UTP</name>
        <dbReference type="ChEBI" id="CHEBI:46398"/>
    </ligand>
</feature>
<feature type="binding site" evidence="1">
    <location>
        <begin position="14"/>
        <end position="19"/>
    </location>
    <ligand>
        <name>ATP</name>
        <dbReference type="ChEBI" id="CHEBI:30616"/>
    </ligand>
</feature>
<feature type="binding site" evidence="1">
    <location>
        <position position="71"/>
    </location>
    <ligand>
        <name>ATP</name>
        <dbReference type="ChEBI" id="CHEBI:30616"/>
    </ligand>
</feature>
<feature type="binding site" evidence="1">
    <location>
        <position position="71"/>
    </location>
    <ligand>
        <name>Mg(2+)</name>
        <dbReference type="ChEBI" id="CHEBI:18420"/>
    </ligand>
</feature>
<feature type="binding site" evidence="1">
    <location>
        <position position="140"/>
    </location>
    <ligand>
        <name>Mg(2+)</name>
        <dbReference type="ChEBI" id="CHEBI:18420"/>
    </ligand>
</feature>
<feature type="binding site" evidence="1">
    <location>
        <begin position="147"/>
        <end position="149"/>
    </location>
    <ligand>
        <name>CTP</name>
        <dbReference type="ChEBI" id="CHEBI:37563"/>
        <note>allosteric inhibitor</note>
    </ligand>
</feature>
<feature type="binding site" evidence="1">
    <location>
        <begin position="187"/>
        <end position="192"/>
    </location>
    <ligand>
        <name>CTP</name>
        <dbReference type="ChEBI" id="CHEBI:37563"/>
        <note>allosteric inhibitor</note>
    </ligand>
</feature>
<feature type="binding site" evidence="1">
    <location>
        <begin position="187"/>
        <end position="192"/>
    </location>
    <ligand>
        <name>UTP</name>
        <dbReference type="ChEBI" id="CHEBI:46398"/>
    </ligand>
</feature>
<feature type="binding site" evidence="1">
    <location>
        <position position="223"/>
    </location>
    <ligand>
        <name>CTP</name>
        <dbReference type="ChEBI" id="CHEBI:37563"/>
        <note>allosteric inhibitor</note>
    </ligand>
</feature>
<feature type="binding site" evidence="1">
    <location>
        <position position="223"/>
    </location>
    <ligand>
        <name>UTP</name>
        <dbReference type="ChEBI" id="CHEBI:46398"/>
    </ligand>
</feature>
<feature type="binding site" evidence="1">
    <location>
        <begin position="239"/>
        <end position="241"/>
    </location>
    <ligand>
        <name>ATP</name>
        <dbReference type="ChEBI" id="CHEBI:30616"/>
    </ligand>
</feature>
<feature type="binding site" evidence="1">
    <location>
        <position position="353"/>
    </location>
    <ligand>
        <name>L-glutamine</name>
        <dbReference type="ChEBI" id="CHEBI:58359"/>
    </ligand>
</feature>
<feature type="binding site" evidence="1">
    <location>
        <begin position="381"/>
        <end position="384"/>
    </location>
    <ligand>
        <name>L-glutamine</name>
        <dbReference type="ChEBI" id="CHEBI:58359"/>
    </ligand>
</feature>
<feature type="binding site" evidence="1">
    <location>
        <position position="404"/>
    </location>
    <ligand>
        <name>L-glutamine</name>
        <dbReference type="ChEBI" id="CHEBI:58359"/>
    </ligand>
</feature>
<feature type="binding site" evidence="1">
    <location>
        <position position="471"/>
    </location>
    <ligand>
        <name>L-glutamine</name>
        <dbReference type="ChEBI" id="CHEBI:58359"/>
    </ligand>
</feature>
<keyword id="KW-0067">ATP-binding</keyword>
<keyword id="KW-0315">Glutamine amidotransferase</keyword>
<keyword id="KW-0436">Ligase</keyword>
<keyword id="KW-0460">Magnesium</keyword>
<keyword id="KW-0479">Metal-binding</keyword>
<keyword id="KW-0547">Nucleotide-binding</keyword>
<keyword id="KW-0665">Pyrimidine biosynthesis</keyword>
<accession>B0V675</accession>
<comment type="function">
    <text evidence="1">Catalyzes the ATP-dependent amination of UTP to CTP with either L-glutamine or ammonia as the source of nitrogen. Regulates intracellular CTP levels through interactions with the four ribonucleotide triphosphates.</text>
</comment>
<comment type="catalytic activity">
    <reaction evidence="1">
        <text>UTP + L-glutamine + ATP + H2O = CTP + L-glutamate + ADP + phosphate + 2 H(+)</text>
        <dbReference type="Rhea" id="RHEA:26426"/>
        <dbReference type="ChEBI" id="CHEBI:15377"/>
        <dbReference type="ChEBI" id="CHEBI:15378"/>
        <dbReference type="ChEBI" id="CHEBI:29985"/>
        <dbReference type="ChEBI" id="CHEBI:30616"/>
        <dbReference type="ChEBI" id="CHEBI:37563"/>
        <dbReference type="ChEBI" id="CHEBI:43474"/>
        <dbReference type="ChEBI" id="CHEBI:46398"/>
        <dbReference type="ChEBI" id="CHEBI:58359"/>
        <dbReference type="ChEBI" id="CHEBI:456216"/>
        <dbReference type="EC" id="6.3.4.2"/>
    </reaction>
</comment>
<comment type="catalytic activity">
    <reaction evidence="1">
        <text>L-glutamine + H2O = L-glutamate + NH4(+)</text>
        <dbReference type="Rhea" id="RHEA:15889"/>
        <dbReference type="ChEBI" id="CHEBI:15377"/>
        <dbReference type="ChEBI" id="CHEBI:28938"/>
        <dbReference type="ChEBI" id="CHEBI:29985"/>
        <dbReference type="ChEBI" id="CHEBI:58359"/>
    </reaction>
</comment>
<comment type="catalytic activity">
    <reaction evidence="1">
        <text>UTP + NH4(+) + ATP = CTP + ADP + phosphate + 2 H(+)</text>
        <dbReference type="Rhea" id="RHEA:16597"/>
        <dbReference type="ChEBI" id="CHEBI:15378"/>
        <dbReference type="ChEBI" id="CHEBI:28938"/>
        <dbReference type="ChEBI" id="CHEBI:30616"/>
        <dbReference type="ChEBI" id="CHEBI:37563"/>
        <dbReference type="ChEBI" id="CHEBI:43474"/>
        <dbReference type="ChEBI" id="CHEBI:46398"/>
        <dbReference type="ChEBI" id="CHEBI:456216"/>
    </reaction>
</comment>
<comment type="activity regulation">
    <text evidence="1">Allosterically activated by GTP, when glutamine is the substrate; GTP has no effect on the reaction when ammonia is the substrate. The allosteric effector GTP functions by stabilizing the protein conformation that binds the tetrahedral intermediate(s) formed during glutamine hydrolysis. Inhibited by the product CTP, via allosteric rather than competitive inhibition.</text>
</comment>
<comment type="pathway">
    <text evidence="1">Pyrimidine metabolism; CTP biosynthesis via de novo pathway; CTP from UDP: step 2/2.</text>
</comment>
<comment type="subunit">
    <text evidence="1">Homotetramer.</text>
</comment>
<comment type="miscellaneous">
    <text evidence="1">CTPSs have evolved a hybrid strategy for distinguishing between UTP and CTP. The overlapping regions of the product feedback inhibitory and substrate sites recognize a common feature in both compounds, the triphosphate moiety. To differentiate isosteric substrate and product pyrimidine rings, an additional pocket far from the expected kinase/ligase catalytic site, specifically recognizes the cytosine and ribose portions of the product inhibitor.</text>
</comment>
<comment type="similarity">
    <text evidence="1">Belongs to the CTP synthase family.</text>
</comment>
<evidence type="ECO:0000255" key="1">
    <source>
        <dbReference type="HAMAP-Rule" id="MF_01227"/>
    </source>
</evidence>
<protein>
    <recommendedName>
        <fullName evidence="1">CTP synthase</fullName>
        <ecNumber evidence="1">6.3.4.2</ecNumber>
    </recommendedName>
    <alternativeName>
        <fullName evidence="1">Cytidine 5'-triphosphate synthase</fullName>
    </alternativeName>
    <alternativeName>
        <fullName evidence="1">Cytidine triphosphate synthetase</fullName>
        <shortName evidence="1">CTP synthetase</shortName>
        <shortName evidence="1">CTPS</shortName>
    </alternativeName>
    <alternativeName>
        <fullName evidence="1">UTP--ammonia ligase</fullName>
    </alternativeName>
</protein>
<gene>
    <name evidence="1" type="primary">pyrG</name>
    <name type="ordered locus">ABAYE1667</name>
</gene>
<proteinExistence type="inferred from homology"/>
<dbReference type="EC" id="6.3.4.2" evidence="1"/>
<dbReference type="EMBL" id="CU459141">
    <property type="protein sequence ID" value="CAM86559.1"/>
    <property type="molecule type" value="Genomic_DNA"/>
</dbReference>
<dbReference type="RefSeq" id="WP_000148658.1">
    <property type="nucleotide sequence ID" value="NZ_JBDGFB010000010.1"/>
</dbReference>
<dbReference type="SMR" id="B0V675"/>
<dbReference type="EnsemblBacteria" id="CAM86559">
    <property type="protein sequence ID" value="CAM86559"/>
    <property type="gene ID" value="ABAYE1667"/>
</dbReference>
<dbReference type="KEGG" id="aby:ABAYE1667"/>
<dbReference type="HOGENOM" id="CLU_011675_5_0_6"/>
<dbReference type="UniPathway" id="UPA00159">
    <property type="reaction ID" value="UER00277"/>
</dbReference>
<dbReference type="GO" id="GO:0005829">
    <property type="term" value="C:cytosol"/>
    <property type="evidence" value="ECO:0007669"/>
    <property type="project" value="TreeGrafter"/>
</dbReference>
<dbReference type="GO" id="GO:0005524">
    <property type="term" value="F:ATP binding"/>
    <property type="evidence" value="ECO:0007669"/>
    <property type="project" value="UniProtKB-KW"/>
</dbReference>
<dbReference type="GO" id="GO:0003883">
    <property type="term" value="F:CTP synthase activity"/>
    <property type="evidence" value="ECO:0007669"/>
    <property type="project" value="UniProtKB-UniRule"/>
</dbReference>
<dbReference type="GO" id="GO:0004359">
    <property type="term" value="F:glutaminase activity"/>
    <property type="evidence" value="ECO:0007669"/>
    <property type="project" value="RHEA"/>
</dbReference>
<dbReference type="GO" id="GO:0042802">
    <property type="term" value="F:identical protein binding"/>
    <property type="evidence" value="ECO:0007669"/>
    <property type="project" value="TreeGrafter"/>
</dbReference>
<dbReference type="GO" id="GO:0046872">
    <property type="term" value="F:metal ion binding"/>
    <property type="evidence" value="ECO:0007669"/>
    <property type="project" value="UniProtKB-KW"/>
</dbReference>
<dbReference type="GO" id="GO:0044210">
    <property type="term" value="P:'de novo' CTP biosynthetic process"/>
    <property type="evidence" value="ECO:0007669"/>
    <property type="project" value="UniProtKB-UniRule"/>
</dbReference>
<dbReference type="GO" id="GO:0019856">
    <property type="term" value="P:pyrimidine nucleobase biosynthetic process"/>
    <property type="evidence" value="ECO:0007669"/>
    <property type="project" value="TreeGrafter"/>
</dbReference>
<dbReference type="CDD" id="cd03113">
    <property type="entry name" value="CTPS_N"/>
    <property type="match status" value="1"/>
</dbReference>
<dbReference type="CDD" id="cd01746">
    <property type="entry name" value="GATase1_CTP_Synthase"/>
    <property type="match status" value="1"/>
</dbReference>
<dbReference type="FunFam" id="3.40.50.300:FF:000009">
    <property type="entry name" value="CTP synthase"/>
    <property type="match status" value="1"/>
</dbReference>
<dbReference type="FunFam" id="3.40.50.880:FF:000002">
    <property type="entry name" value="CTP synthase"/>
    <property type="match status" value="1"/>
</dbReference>
<dbReference type="Gene3D" id="3.40.50.880">
    <property type="match status" value="1"/>
</dbReference>
<dbReference type="Gene3D" id="3.40.50.300">
    <property type="entry name" value="P-loop containing nucleotide triphosphate hydrolases"/>
    <property type="match status" value="1"/>
</dbReference>
<dbReference type="HAMAP" id="MF_01227">
    <property type="entry name" value="PyrG"/>
    <property type="match status" value="1"/>
</dbReference>
<dbReference type="InterPro" id="IPR029062">
    <property type="entry name" value="Class_I_gatase-like"/>
</dbReference>
<dbReference type="InterPro" id="IPR004468">
    <property type="entry name" value="CTP_synthase"/>
</dbReference>
<dbReference type="InterPro" id="IPR017456">
    <property type="entry name" value="CTP_synthase_N"/>
</dbReference>
<dbReference type="InterPro" id="IPR017926">
    <property type="entry name" value="GATASE"/>
</dbReference>
<dbReference type="InterPro" id="IPR033828">
    <property type="entry name" value="GATase1_CTP_Synthase"/>
</dbReference>
<dbReference type="InterPro" id="IPR027417">
    <property type="entry name" value="P-loop_NTPase"/>
</dbReference>
<dbReference type="NCBIfam" id="NF003792">
    <property type="entry name" value="PRK05380.1"/>
    <property type="match status" value="1"/>
</dbReference>
<dbReference type="NCBIfam" id="TIGR00337">
    <property type="entry name" value="PyrG"/>
    <property type="match status" value="1"/>
</dbReference>
<dbReference type="PANTHER" id="PTHR11550">
    <property type="entry name" value="CTP SYNTHASE"/>
    <property type="match status" value="1"/>
</dbReference>
<dbReference type="PANTHER" id="PTHR11550:SF0">
    <property type="entry name" value="CTP SYNTHASE-RELATED"/>
    <property type="match status" value="1"/>
</dbReference>
<dbReference type="Pfam" id="PF06418">
    <property type="entry name" value="CTP_synth_N"/>
    <property type="match status" value="1"/>
</dbReference>
<dbReference type="Pfam" id="PF00117">
    <property type="entry name" value="GATase"/>
    <property type="match status" value="1"/>
</dbReference>
<dbReference type="SUPFAM" id="SSF52317">
    <property type="entry name" value="Class I glutamine amidotransferase-like"/>
    <property type="match status" value="1"/>
</dbReference>
<dbReference type="SUPFAM" id="SSF52540">
    <property type="entry name" value="P-loop containing nucleoside triphosphate hydrolases"/>
    <property type="match status" value="1"/>
</dbReference>
<dbReference type="PROSITE" id="PS51273">
    <property type="entry name" value="GATASE_TYPE_1"/>
    <property type="match status" value="1"/>
</dbReference>